<reference key="1">
    <citation type="journal article" date="1991" name="Biochem. Biophys. Res. Commun.">
        <title>Molecular cloning and nucleotide sequence of Streptomyces griseus trypsin gene.</title>
        <authorList>
            <person name="Kim J.C."/>
            <person name="Cha S.H."/>
            <person name="Jeong S.T."/>
            <person name="Oh S.K."/>
            <person name="Byun S.M."/>
        </authorList>
    </citation>
    <scope>NUCLEOTIDE SEQUENCE [GENOMIC DNA]</scope>
    <source>
        <strain>ATCC 10137 / DSM 40855 / NBRC 3430 / NCIMB 8232 / NCTC 6961 / IMRU 3496</strain>
    </source>
</reference>
<reference key="2">
    <citation type="journal article" date="1975" name="Biochemistry">
        <title>Amino acid sequence of Streptomyces griseus trypsin. Cyanogen bromide fragments and complete sequence.</title>
        <authorList>
            <person name="Olafson R.W."/>
            <person name="Jurasek L."/>
            <person name="Carpenter M.R."/>
            <person name="Smillie L.B."/>
        </authorList>
    </citation>
    <scope>PROTEIN SEQUENCE OF 37-259</scope>
</reference>
<reference key="3">
    <citation type="journal article" date="1988" name="J. Mol. Biol.">
        <title>Refined crystal structure of Streptomyces griseus trypsin at 1.7-A resolution.</title>
        <authorList>
            <person name="Read R.J."/>
            <person name="James M.N.G."/>
        </authorList>
    </citation>
    <scope>X-RAY CRYSTALLOGRAPHY (1.8 ANGSTROMS)</scope>
</reference>
<protein>
    <recommendedName>
        <fullName>Trypsin</fullName>
        <ecNumber>3.4.21.4</ecNumber>
    </recommendedName>
    <alternativeName>
        <fullName>SGT</fullName>
    </alternativeName>
</protein>
<evidence type="ECO:0000255" key="1">
    <source>
        <dbReference type="PROSITE-ProRule" id="PRU00274"/>
    </source>
</evidence>
<evidence type="ECO:0000269" key="2">
    <source>
    </source>
</evidence>
<evidence type="ECO:0000305" key="3"/>
<evidence type="ECO:0007829" key="4">
    <source>
        <dbReference type="PDB" id="1OS8"/>
    </source>
</evidence>
<evidence type="ECO:0007829" key="5">
    <source>
        <dbReference type="PDB" id="1SGT"/>
    </source>
</evidence>
<evidence type="ECO:0007829" key="6">
    <source>
        <dbReference type="PDB" id="3BEU"/>
    </source>
</evidence>
<evidence type="ECO:0007829" key="7">
    <source>
        <dbReference type="PDB" id="3I78"/>
    </source>
</evidence>
<proteinExistence type="evidence at protein level"/>
<sequence>MKHFLRALKRCSVAVATVAIAVVGLQPVTASAAPNPVVGGTRAAQGEFPFMVRLSMGCGGALYAQDIVLTAAHCVSGSGNNTSITATGGVVDLQSSSAVKVRSTKVLQAPGYNGTGKDWALIKLAQPINQPTLKIATTTAYNQGTFTVAGWGANREGGSQQRYLLKANVPFVSDAACRSAYGNELVANEEICAGYPDTGGVDTCQGDSGGPMFRKDNADEWIQVGIVSWGYGCARPGYPGVYTEVSTFASAIASAARTL</sequence>
<feature type="signal peptide">
    <location>
        <begin position="1"/>
        <end position="32"/>
    </location>
</feature>
<feature type="propeptide" id="PRO_0000028307" description="Activation peptide" evidence="2">
    <location>
        <begin position="33"/>
        <end position="36"/>
    </location>
</feature>
<feature type="chain" id="PRO_0000028308" description="Trypsin">
    <location>
        <begin position="37"/>
        <end position="259"/>
    </location>
</feature>
<feature type="domain" description="Peptidase S1" evidence="1">
    <location>
        <begin position="37"/>
        <end position="257"/>
    </location>
</feature>
<feature type="active site" description="Charge relay system">
    <location>
        <position position="73"/>
    </location>
</feature>
<feature type="active site" description="Charge relay system">
    <location>
        <position position="118"/>
    </location>
</feature>
<feature type="active site" description="Charge relay system">
    <location>
        <position position="208"/>
    </location>
</feature>
<feature type="site" description="Required for specificity">
    <location>
        <position position="202"/>
    </location>
</feature>
<feature type="disulfide bond">
    <location>
        <begin position="58"/>
        <end position="74"/>
    </location>
</feature>
<feature type="disulfide bond">
    <location>
        <begin position="177"/>
        <end position="192"/>
    </location>
</feature>
<feature type="disulfide bond">
    <location>
        <begin position="204"/>
        <end position="233"/>
    </location>
</feature>
<feature type="sequence conflict" description="In Ref. 2; AA sequence." evidence="3" ref="2">
    <location>
        <begin position="95"/>
        <end position="96"/>
    </location>
</feature>
<feature type="turn" evidence="6">
    <location>
        <begin position="45"/>
        <end position="47"/>
    </location>
</feature>
<feature type="strand" evidence="6">
    <location>
        <begin position="51"/>
        <end position="54"/>
    </location>
</feature>
<feature type="turn" evidence="6">
    <location>
        <begin position="55"/>
        <end position="57"/>
    </location>
</feature>
<feature type="strand" evidence="6">
    <location>
        <begin position="58"/>
        <end position="64"/>
    </location>
</feature>
<feature type="strand" evidence="6">
    <location>
        <begin position="67"/>
        <end position="70"/>
    </location>
</feature>
<feature type="helix" evidence="6">
    <location>
        <begin position="72"/>
        <end position="74"/>
    </location>
</feature>
<feature type="strand" evidence="6">
    <location>
        <begin position="77"/>
        <end position="81"/>
    </location>
</feature>
<feature type="strand" evidence="6">
    <location>
        <begin position="85"/>
        <end position="89"/>
    </location>
</feature>
<feature type="strand" evidence="7">
    <location>
        <begin position="91"/>
        <end position="95"/>
    </location>
</feature>
<feature type="strand" evidence="6">
    <location>
        <begin position="99"/>
        <end position="108"/>
    </location>
</feature>
<feature type="strand" evidence="4">
    <location>
        <begin position="113"/>
        <end position="116"/>
    </location>
</feature>
<feature type="strand" evidence="6">
    <location>
        <begin position="120"/>
        <end position="126"/>
    </location>
</feature>
<feature type="strand" evidence="5">
    <location>
        <begin position="137"/>
        <end position="139"/>
    </location>
</feature>
<feature type="strand" evidence="6">
    <location>
        <begin position="142"/>
        <end position="152"/>
    </location>
</feature>
<feature type="strand" evidence="6">
    <location>
        <begin position="165"/>
        <end position="172"/>
    </location>
</feature>
<feature type="helix" evidence="6">
    <location>
        <begin position="174"/>
        <end position="180"/>
    </location>
</feature>
<feature type="helix" evidence="4">
    <location>
        <begin position="182"/>
        <end position="184"/>
    </location>
</feature>
<feature type="helix" evidence="6">
    <location>
        <begin position="187"/>
        <end position="189"/>
    </location>
</feature>
<feature type="strand" evidence="6">
    <location>
        <begin position="190"/>
        <end position="193"/>
    </location>
</feature>
<feature type="strand" evidence="6">
    <location>
        <begin position="197"/>
        <end position="200"/>
    </location>
</feature>
<feature type="strand" evidence="6">
    <location>
        <begin position="211"/>
        <end position="215"/>
    </location>
</feature>
<feature type="strand" evidence="6">
    <location>
        <begin position="221"/>
        <end position="234"/>
    </location>
</feature>
<feature type="strand" evidence="6">
    <location>
        <begin position="240"/>
        <end position="244"/>
    </location>
</feature>
<feature type="helix" evidence="6">
    <location>
        <begin position="245"/>
        <end position="256"/>
    </location>
</feature>
<organism>
    <name type="scientific">Streptomyces griseus</name>
    <dbReference type="NCBI Taxonomy" id="1911"/>
    <lineage>
        <taxon>Bacteria</taxon>
        <taxon>Bacillati</taxon>
        <taxon>Actinomycetota</taxon>
        <taxon>Actinomycetes</taxon>
        <taxon>Kitasatosporales</taxon>
        <taxon>Streptomycetaceae</taxon>
        <taxon>Streptomyces</taxon>
    </lineage>
</organism>
<dbReference type="EC" id="3.4.21.4"/>
<dbReference type="EMBL" id="M64471">
    <property type="protein sequence ID" value="AAA26820.1"/>
    <property type="status" value="ALT_SEQ"/>
    <property type="molecule type" value="Genomic_DNA"/>
</dbReference>
<dbReference type="PIR" id="JQ1302">
    <property type="entry name" value="TRSMG"/>
</dbReference>
<dbReference type="RefSeq" id="WP_003965150.1">
    <property type="nucleotide sequence ID" value="NZ_UAVD01000024.1"/>
</dbReference>
<dbReference type="PDB" id="1OS8">
    <property type="method" value="X-ray"/>
    <property type="resolution" value="1.55 A"/>
    <property type="chains" value="A=37-259"/>
</dbReference>
<dbReference type="PDB" id="1OSS">
    <property type="method" value="X-ray"/>
    <property type="resolution" value="1.93 A"/>
    <property type="chains" value="A=37-259"/>
</dbReference>
<dbReference type="PDB" id="1SGT">
    <property type="method" value="X-ray"/>
    <property type="resolution" value="1.70 A"/>
    <property type="chains" value="A=37-259"/>
</dbReference>
<dbReference type="PDB" id="2FMJ">
    <property type="method" value="X-ray"/>
    <property type="resolution" value="1.65 A"/>
    <property type="chains" value="A=37-259"/>
</dbReference>
<dbReference type="PDB" id="3BEU">
    <property type="method" value="X-ray"/>
    <property type="resolution" value="1.05 A"/>
    <property type="chains" value="A/B=37-259"/>
</dbReference>
<dbReference type="PDB" id="3I77">
    <property type="method" value="X-ray"/>
    <property type="resolution" value="2.10 A"/>
    <property type="chains" value="A=37-259"/>
</dbReference>
<dbReference type="PDB" id="3I78">
    <property type="method" value="X-ray"/>
    <property type="resolution" value="3.00 A"/>
    <property type="chains" value="A=37-259"/>
</dbReference>
<dbReference type="PDBsum" id="1OS8"/>
<dbReference type="PDBsum" id="1OSS"/>
<dbReference type="PDBsum" id="1SGT"/>
<dbReference type="PDBsum" id="2FMJ"/>
<dbReference type="PDBsum" id="3BEU"/>
<dbReference type="PDBsum" id="3I77"/>
<dbReference type="PDBsum" id="3I78"/>
<dbReference type="SMR" id="P00775"/>
<dbReference type="STRING" id="1911.GCA_001715295_03561"/>
<dbReference type="DrugBank" id="DB03127">
    <property type="generic name" value="Benzamidine"/>
</dbReference>
<dbReference type="MEROPS" id="S01.101"/>
<dbReference type="OMA" id="WGFRIAD"/>
<dbReference type="OrthoDB" id="1496095at2"/>
<dbReference type="BRENDA" id="3.4.21.4">
    <property type="organism ID" value="6035"/>
</dbReference>
<dbReference type="EvolutionaryTrace" id="P00775"/>
<dbReference type="GO" id="GO:0004252">
    <property type="term" value="F:serine-type endopeptidase activity"/>
    <property type="evidence" value="ECO:0007669"/>
    <property type="project" value="UniProtKB-EC"/>
</dbReference>
<dbReference type="GO" id="GO:0006508">
    <property type="term" value="P:proteolysis"/>
    <property type="evidence" value="ECO:0007669"/>
    <property type="project" value="UniProtKB-KW"/>
</dbReference>
<dbReference type="CDD" id="cd00190">
    <property type="entry name" value="Tryp_SPc"/>
    <property type="match status" value="1"/>
</dbReference>
<dbReference type="Gene3D" id="2.40.10.10">
    <property type="entry name" value="Trypsin-like serine proteases"/>
    <property type="match status" value="2"/>
</dbReference>
<dbReference type="InterPro" id="IPR009003">
    <property type="entry name" value="Peptidase_S1_PA"/>
</dbReference>
<dbReference type="InterPro" id="IPR043504">
    <property type="entry name" value="Peptidase_S1_PA_chymotrypsin"/>
</dbReference>
<dbReference type="InterPro" id="IPR001314">
    <property type="entry name" value="Peptidase_S1A"/>
</dbReference>
<dbReference type="InterPro" id="IPR001254">
    <property type="entry name" value="Trypsin_dom"/>
</dbReference>
<dbReference type="InterPro" id="IPR018114">
    <property type="entry name" value="TRYPSIN_HIS"/>
</dbReference>
<dbReference type="InterPro" id="IPR033116">
    <property type="entry name" value="TRYPSIN_SER"/>
</dbReference>
<dbReference type="PANTHER" id="PTHR24252">
    <property type="entry name" value="ACROSIN-RELATED"/>
    <property type="match status" value="1"/>
</dbReference>
<dbReference type="PANTHER" id="PTHR24252:SF7">
    <property type="entry name" value="HYALIN"/>
    <property type="match status" value="1"/>
</dbReference>
<dbReference type="Pfam" id="PF00089">
    <property type="entry name" value="Trypsin"/>
    <property type="match status" value="1"/>
</dbReference>
<dbReference type="PRINTS" id="PR00722">
    <property type="entry name" value="CHYMOTRYPSIN"/>
</dbReference>
<dbReference type="SMART" id="SM00020">
    <property type="entry name" value="Tryp_SPc"/>
    <property type="match status" value="1"/>
</dbReference>
<dbReference type="SUPFAM" id="SSF50494">
    <property type="entry name" value="Trypsin-like serine proteases"/>
    <property type="match status" value="1"/>
</dbReference>
<dbReference type="PROSITE" id="PS50240">
    <property type="entry name" value="TRYPSIN_DOM"/>
    <property type="match status" value="1"/>
</dbReference>
<dbReference type="PROSITE" id="PS00134">
    <property type="entry name" value="TRYPSIN_HIS"/>
    <property type="match status" value="1"/>
</dbReference>
<dbReference type="PROSITE" id="PS00135">
    <property type="entry name" value="TRYPSIN_SER"/>
    <property type="match status" value="1"/>
</dbReference>
<name>TRYP_STRGR</name>
<comment type="catalytic activity">
    <reaction>
        <text>Preferential cleavage: Arg-|-Xaa, Lys-|-Xaa.</text>
        <dbReference type="EC" id="3.4.21.4"/>
    </reaction>
</comment>
<comment type="similarity">
    <text evidence="1">Belongs to the peptidase S1 family.</text>
</comment>
<accession>P00775</accession>
<gene>
    <name type="primary">sprT</name>
</gene>
<keyword id="KW-0002">3D-structure</keyword>
<keyword id="KW-0903">Direct protein sequencing</keyword>
<keyword id="KW-1015">Disulfide bond</keyword>
<keyword id="KW-0378">Hydrolase</keyword>
<keyword id="KW-0645">Protease</keyword>
<keyword id="KW-0720">Serine protease</keyword>
<keyword id="KW-0732">Signal</keyword>
<keyword id="KW-0865">Zymogen</keyword>